<evidence type="ECO:0000250" key="1"/>
<evidence type="ECO:0000255" key="2"/>
<evidence type="ECO:0000255" key="3">
    <source>
        <dbReference type="PROSITE-ProRule" id="PRU10035"/>
    </source>
</evidence>
<evidence type="ECO:0000255" key="4">
    <source>
        <dbReference type="PROSITE-ProRule" id="PRU10036"/>
    </source>
</evidence>
<evidence type="ECO:0000269" key="5">
    <source>
    </source>
</evidence>
<evidence type="ECO:0000269" key="6">
    <source>
    </source>
</evidence>
<evidence type="ECO:0000305" key="7"/>
<evidence type="ECO:0000305" key="8">
    <source>
    </source>
</evidence>
<evidence type="ECO:0000312" key="9">
    <source>
        <dbReference type="EMBL" id="ABU63162.1"/>
    </source>
</evidence>
<reference key="1">
    <citation type="journal article" date="2007" name="FEBS J.">
        <title>Sequences, geographic variations and molecular phylogeny of venom phospholipases and three-finger toxins of eastern India Bungarus fasciatus and kinetic analyses of its Pro31 phospholipases A2.</title>
        <authorList>
            <person name="Tsai I.-H."/>
            <person name="Tsai H.-Y."/>
            <person name="Saha A."/>
            <person name="Gomes A."/>
        </authorList>
    </citation>
    <scope>NUCLEOTIDE SEQUENCE [MRNA]</scope>
    <scope>PROTEIN SEQUENCE OF 28-47</scope>
    <scope>MASS SPECTROMETRY</scope>
    <scope>SUBCELLULAR LOCATION</scope>
    <source>
        <tissue>Venom</tissue>
        <tissue>Venom gland</tissue>
    </source>
</reference>
<reference evidence="9" key="2">
    <citation type="submission" date="2007-04" db="EMBL/GenBank/DDBJ databases">
        <title>Cloning and characterization of nine novel phospholipase A2 from Bungarus fasciatus venom.</title>
        <authorList>
            <person name="Xu C."/>
            <person name="Lai R."/>
        </authorList>
    </citation>
    <scope>NUCLEOTIDE SEQUENCE [MRNA]</scope>
</reference>
<reference key="3">
    <citation type="journal article" date="1981" name="Toxicon">
        <title>Complete amino acid sequences of two cardiotoxin-like analogues from Bungarus fasciatus (banded krait) snake venom.</title>
        <authorList>
            <person name="Lu H.-S."/>
            <person name="Lo T.-B."/>
        </authorList>
    </citation>
    <scope>PROTEIN SEQUENCE OF 28-145</scope>
    <source>
        <tissue>Venom</tissue>
    </source>
</reference>
<reference key="4">
    <citation type="journal article" date="1990" name="Toxicon">
        <title>Revised amino acid sequences of the three major phospholipases A2 from Bungarus fasciatus (banded krait) venom.</title>
        <authorList>
            <person name="Liu C.-S."/>
            <person name="Chen J.-M."/>
            <person name="Chang C.-H."/>
            <person name="Chen S.-W."/>
            <person name="Tsai I.-H."/>
            <person name="Lu H.-S."/>
            <person name="Lo T.-B."/>
        </authorList>
    </citation>
    <scope>SEQUENCE REVISION</scope>
    <source>
        <tissue>Venom</tissue>
    </source>
</reference>
<organism>
    <name type="scientific">Bungarus fasciatus</name>
    <name type="common">Banded krait</name>
    <name type="synonym">Pseudoboa fasciata</name>
    <dbReference type="NCBI Taxonomy" id="8613"/>
    <lineage>
        <taxon>Eukaryota</taxon>
        <taxon>Metazoa</taxon>
        <taxon>Chordata</taxon>
        <taxon>Craniata</taxon>
        <taxon>Vertebrata</taxon>
        <taxon>Euteleostomi</taxon>
        <taxon>Lepidosauria</taxon>
        <taxon>Squamata</taxon>
        <taxon>Bifurcata</taxon>
        <taxon>Unidentata</taxon>
        <taxon>Episquamata</taxon>
        <taxon>Toxicofera</taxon>
        <taxon>Serpentes</taxon>
        <taxon>Colubroidea</taxon>
        <taxon>Elapidae</taxon>
        <taxon>Bungarinae</taxon>
        <taxon>Bungarus</taxon>
    </lineage>
</organism>
<keyword id="KW-0106">Calcium</keyword>
<keyword id="KW-0903">Direct protein sequencing</keyword>
<keyword id="KW-1015">Disulfide bond</keyword>
<keyword id="KW-0378">Hydrolase</keyword>
<keyword id="KW-0442">Lipid degradation</keyword>
<keyword id="KW-0443">Lipid metabolism</keyword>
<keyword id="KW-0479">Metal-binding</keyword>
<keyword id="KW-0528">Neurotoxin</keyword>
<keyword id="KW-0638">Presynaptic neurotoxin</keyword>
<keyword id="KW-0964">Secreted</keyword>
<keyword id="KW-0732">Signal</keyword>
<keyword id="KW-0800">Toxin</keyword>
<sequence>MNPAHLLVLLAVCVSLLGAANIPPQPLNLLQFKNMIQCAGSRLWVAYVKYGCYCGPGGTGTPLDQLDRCCQTHDHCYDNAKKFGNCIPYFKTYEYTCNKPDITCTDAKGSCGRTVCDCDRAAAICFAAAPYNLANFGIDKEKHCQ</sequence>
<name>PA2B3_BUNFA</name>
<dbReference type="EC" id="3.1.1.4"/>
<dbReference type="EMBL" id="DQ835584">
    <property type="protein sequence ID" value="ABI33872.1"/>
    <property type="molecule type" value="mRNA"/>
</dbReference>
<dbReference type="EMBL" id="EF583968">
    <property type="protein sequence ID" value="ABU63162.1"/>
    <property type="molecule type" value="mRNA"/>
</dbReference>
<dbReference type="PIR" id="B36487">
    <property type="entry name" value="PSKFT3"/>
</dbReference>
<dbReference type="SMR" id="P00629"/>
<dbReference type="GO" id="GO:0005576">
    <property type="term" value="C:extracellular region"/>
    <property type="evidence" value="ECO:0007669"/>
    <property type="project" value="UniProtKB-KW"/>
</dbReference>
<dbReference type="GO" id="GO:0005509">
    <property type="term" value="F:calcium ion binding"/>
    <property type="evidence" value="ECO:0007669"/>
    <property type="project" value="InterPro"/>
</dbReference>
<dbReference type="GO" id="GO:0047498">
    <property type="term" value="F:calcium-dependent phospholipase A2 activity"/>
    <property type="evidence" value="ECO:0007669"/>
    <property type="project" value="TreeGrafter"/>
</dbReference>
<dbReference type="GO" id="GO:0005543">
    <property type="term" value="F:phospholipid binding"/>
    <property type="evidence" value="ECO:0007669"/>
    <property type="project" value="TreeGrafter"/>
</dbReference>
<dbReference type="GO" id="GO:0005102">
    <property type="term" value="F:signaling receptor binding"/>
    <property type="evidence" value="ECO:0007669"/>
    <property type="project" value="TreeGrafter"/>
</dbReference>
<dbReference type="GO" id="GO:0090729">
    <property type="term" value="F:toxin activity"/>
    <property type="evidence" value="ECO:0007669"/>
    <property type="project" value="UniProtKB-KW"/>
</dbReference>
<dbReference type="GO" id="GO:0050482">
    <property type="term" value="P:arachidonate secretion"/>
    <property type="evidence" value="ECO:0007669"/>
    <property type="project" value="InterPro"/>
</dbReference>
<dbReference type="GO" id="GO:0006633">
    <property type="term" value="P:fatty acid biosynthetic process"/>
    <property type="evidence" value="ECO:0007669"/>
    <property type="project" value="TreeGrafter"/>
</dbReference>
<dbReference type="GO" id="GO:0016042">
    <property type="term" value="P:lipid catabolic process"/>
    <property type="evidence" value="ECO:0007669"/>
    <property type="project" value="InterPro"/>
</dbReference>
<dbReference type="GO" id="GO:0006644">
    <property type="term" value="P:phospholipid metabolic process"/>
    <property type="evidence" value="ECO:0007669"/>
    <property type="project" value="InterPro"/>
</dbReference>
<dbReference type="GO" id="GO:0048146">
    <property type="term" value="P:positive regulation of fibroblast proliferation"/>
    <property type="evidence" value="ECO:0007669"/>
    <property type="project" value="TreeGrafter"/>
</dbReference>
<dbReference type="CDD" id="cd00125">
    <property type="entry name" value="PLA2c"/>
    <property type="match status" value="1"/>
</dbReference>
<dbReference type="FunFam" id="1.20.90.10:FF:000007">
    <property type="entry name" value="Acidic phospholipase A2"/>
    <property type="match status" value="1"/>
</dbReference>
<dbReference type="Gene3D" id="1.20.90.10">
    <property type="entry name" value="Phospholipase A2 domain"/>
    <property type="match status" value="1"/>
</dbReference>
<dbReference type="InterPro" id="IPR001211">
    <property type="entry name" value="PLipase_A2"/>
</dbReference>
<dbReference type="InterPro" id="IPR033112">
    <property type="entry name" value="PLipase_A2_Asp_AS"/>
</dbReference>
<dbReference type="InterPro" id="IPR016090">
    <property type="entry name" value="PLipase_A2_dom"/>
</dbReference>
<dbReference type="InterPro" id="IPR036444">
    <property type="entry name" value="PLipase_A2_dom_sf"/>
</dbReference>
<dbReference type="InterPro" id="IPR033113">
    <property type="entry name" value="PLipase_A2_His_AS"/>
</dbReference>
<dbReference type="PANTHER" id="PTHR11716:SF94">
    <property type="entry name" value="PHOSPHOLIPASE A2"/>
    <property type="match status" value="1"/>
</dbReference>
<dbReference type="PANTHER" id="PTHR11716">
    <property type="entry name" value="PHOSPHOLIPASE A2 FAMILY MEMBER"/>
    <property type="match status" value="1"/>
</dbReference>
<dbReference type="Pfam" id="PF00068">
    <property type="entry name" value="Phospholip_A2_1"/>
    <property type="match status" value="1"/>
</dbReference>
<dbReference type="PRINTS" id="PR00389">
    <property type="entry name" value="PHPHLIPASEA2"/>
</dbReference>
<dbReference type="SMART" id="SM00085">
    <property type="entry name" value="PA2c"/>
    <property type="match status" value="1"/>
</dbReference>
<dbReference type="SUPFAM" id="SSF48619">
    <property type="entry name" value="Phospholipase A2, PLA2"/>
    <property type="match status" value="1"/>
</dbReference>
<dbReference type="PROSITE" id="PS00119">
    <property type="entry name" value="PA2_ASP"/>
    <property type="match status" value="1"/>
</dbReference>
<dbReference type="PROSITE" id="PS00118">
    <property type="entry name" value="PA2_HIS"/>
    <property type="match status" value="1"/>
</dbReference>
<feature type="signal peptide" evidence="2">
    <location>
        <begin position="1"/>
        <end position="19"/>
    </location>
</feature>
<feature type="propeptide" id="PRO_0000291949" evidence="5 6">
    <location>
        <begin position="20"/>
        <end position="27"/>
    </location>
</feature>
<feature type="chain" id="PRO_0000161637" description="Basic phospholipase A2 Vb-2">
    <location>
        <begin position="28"/>
        <end position="145"/>
    </location>
</feature>
<feature type="active site" evidence="1">
    <location>
        <position position="73"/>
    </location>
</feature>
<feature type="active site" evidence="1">
    <location>
        <position position="119"/>
    </location>
</feature>
<feature type="binding site" evidence="1">
    <location>
        <position position="53"/>
    </location>
    <ligand>
        <name>Ca(2+)</name>
        <dbReference type="ChEBI" id="CHEBI:29108"/>
    </ligand>
</feature>
<feature type="binding site" evidence="1">
    <location>
        <position position="55"/>
    </location>
    <ligand>
        <name>Ca(2+)</name>
        <dbReference type="ChEBI" id="CHEBI:29108"/>
    </ligand>
</feature>
<feature type="binding site" evidence="1">
    <location>
        <position position="57"/>
    </location>
    <ligand>
        <name>Ca(2+)</name>
        <dbReference type="ChEBI" id="CHEBI:29108"/>
    </ligand>
</feature>
<feature type="binding site" evidence="1">
    <location>
        <position position="74"/>
    </location>
    <ligand>
        <name>Ca(2+)</name>
        <dbReference type="ChEBI" id="CHEBI:29108"/>
    </ligand>
</feature>
<feature type="disulfide bond" evidence="1">
    <location>
        <begin position="38"/>
        <end position="97"/>
    </location>
</feature>
<feature type="disulfide bond" evidence="1">
    <location>
        <begin position="52"/>
        <end position="144"/>
    </location>
</feature>
<feature type="disulfide bond" evidence="1">
    <location>
        <begin position="54"/>
        <end position="70"/>
    </location>
</feature>
<feature type="disulfide bond" evidence="1">
    <location>
        <begin position="69"/>
        <end position="125"/>
    </location>
</feature>
<feature type="disulfide bond" evidence="1">
    <location>
        <begin position="76"/>
        <end position="118"/>
    </location>
</feature>
<feature type="disulfide bond" evidence="1">
    <location>
        <begin position="86"/>
        <end position="111"/>
    </location>
</feature>
<feature type="disulfide bond" evidence="1">
    <location>
        <begin position="104"/>
        <end position="116"/>
    </location>
</feature>
<proteinExistence type="evidence at protein level"/>
<protein>
    <recommendedName>
        <fullName>Basic phospholipase A2 Vb-2</fullName>
        <shortName>svPLA2</shortName>
        <ecNumber>3.1.1.4</ecNumber>
    </recommendedName>
    <alternativeName>
        <fullName>Phosphatidylcholine 2-acylhydrolase</fullName>
    </alternativeName>
    <alternativeName>
        <fullName evidence="9">Phospholipase A2 BF_31</fullName>
    </alternativeName>
    <alternativeName>
        <fullName>Toxin V-3</fullName>
    </alternativeName>
</protein>
<accession>P00629</accession>
<accession>A2CKF8</accession>
<accession>B2KNL2</accession>
<comment type="function">
    <text>Snake venom phospholipase A2 (PLA2) that has only a weak enzymatic activity. Inhibits neuromuscular transmission by blocking acetylcholine release from the nerve termini. PLA2 catalyzes the calcium-dependent hydrolysis of the 2-acyl groups in 3-sn-phosphoglycerides.</text>
</comment>
<comment type="catalytic activity">
    <reaction evidence="3 4">
        <text>a 1,2-diacyl-sn-glycero-3-phosphocholine + H2O = a 1-acyl-sn-glycero-3-phosphocholine + a fatty acid + H(+)</text>
        <dbReference type="Rhea" id="RHEA:15801"/>
        <dbReference type="ChEBI" id="CHEBI:15377"/>
        <dbReference type="ChEBI" id="CHEBI:15378"/>
        <dbReference type="ChEBI" id="CHEBI:28868"/>
        <dbReference type="ChEBI" id="CHEBI:57643"/>
        <dbReference type="ChEBI" id="CHEBI:58168"/>
        <dbReference type="EC" id="3.1.1.4"/>
    </reaction>
</comment>
<comment type="cofactor">
    <cofactor evidence="1">
        <name>Ca(2+)</name>
        <dbReference type="ChEBI" id="CHEBI:29108"/>
    </cofactor>
    <text evidence="1">Binds 1 Ca(2+) ion.</text>
</comment>
<comment type="subcellular location">
    <subcellularLocation>
        <location evidence="5">Secreted</location>
    </subcellularLocation>
</comment>
<comment type="tissue specificity">
    <text evidence="8">Expressed by the venom gland.</text>
</comment>
<comment type="mass spectrometry"/>
<comment type="similarity">
    <text evidence="7">Belongs to the phospholipase A2 family. Group I subfamily. D49 sub-subfamily.</text>
</comment>